<sequence>MNRVILLLSVMCVGVSSQPITENQRLFSIAVGRVQYLHLVAKKLFSDFENSLQLEDQRLLNKIASKEFCHSDNFLSPIDKHETQGSSVQKLLSVSYRLIESWEFFSRFLVASFAVRTQVTSKLSELKMGLLKLIEANQDGAGGFSESSVLQLTPYGNSELFACFKKDMHKVETYLTVAKCRLFPEANCTL</sequence>
<name>SOMA_PAROL</name>
<keyword id="KW-1015">Disulfide bond</keyword>
<keyword id="KW-0372">Hormone</keyword>
<keyword id="KW-0964">Secreted</keyword>
<keyword id="KW-0732">Signal</keyword>
<accession>P09537</accession>
<organism>
    <name type="scientific">Paralichthys olivaceus</name>
    <name type="common">Bastard halibut</name>
    <name type="synonym">Hippoglossus olivaceus</name>
    <dbReference type="NCBI Taxonomy" id="8255"/>
    <lineage>
        <taxon>Eukaryota</taxon>
        <taxon>Metazoa</taxon>
        <taxon>Chordata</taxon>
        <taxon>Craniata</taxon>
        <taxon>Vertebrata</taxon>
        <taxon>Euteleostomi</taxon>
        <taxon>Actinopterygii</taxon>
        <taxon>Neopterygii</taxon>
        <taxon>Teleostei</taxon>
        <taxon>Neoteleostei</taxon>
        <taxon>Acanthomorphata</taxon>
        <taxon>Carangaria</taxon>
        <taxon>Pleuronectiformes</taxon>
        <taxon>Pleuronectoidei</taxon>
        <taxon>Paralichthyidae</taxon>
        <taxon>Paralichthys</taxon>
    </lineage>
</organism>
<dbReference type="EMBL" id="X12887">
    <property type="protein sequence ID" value="CAA31378.1"/>
    <property type="molecule type" value="mRNA"/>
</dbReference>
<dbReference type="EMBL" id="M23439">
    <property type="protein sequence ID" value="AAA49443.1"/>
    <property type="molecule type" value="mRNA"/>
</dbReference>
<dbReference type="EMBL" id="D29737">
    <property type="protein sequence ID" value="BAA06159.1"/>
    <property type="molecule type" value="Genomic_DNA"/>
</dbReference>
<dbReference type="EMBL" id="X15055">
    <property type="protein sequence ID" value="CAA33155.1"/>
    <property type="molecule type" value="mRNA"/>
</dbReference>
<dbReference type="PIR" id="S04355">
    <property type="entry name" value="S04355"/>
</dbReference>
<dbReference type="RefSeq" id="XP_019963990.1">
    <property type="nucleotide sequence ID" value="XM_020108431.1"/>
</dbReference>
<dbReference type="SMR" id="P09537"/>
<dbReference type="KEGG" id="pov:109643344"/>
<dbReference type="CTD" id="2688"/>
<dbReference type="OrthoDB" id="257605at7898"/>
<dbReference type="GO" id="GO:0005615">
    <property type="term" value="C:extracellular space"/>
    <property type="evidence" value="ECO:0007669"/>
    <property type="project" value="TreeGrafter"/>
</dbReference>
<dbReference type="GO" id="GO:0070186">
    <property type="term" value="F:growth hormone activity"/>
    <property type="evidence" value="ECO:0007669"/>
    <property type="project" value="TreeGrafter"/>
</dbReference>
<dbReference type="GO" id="GO:0005131">
    <property type="term" value="F:growth hormone receptor binding"/>
    <property type="evidence" value="ECO:0007669"/>
    <property type="project" value="TreeGrafter"/>
</dbReference>
<dbReference type="GO" id="GO:0048513">
    <property type="term" value="P:animal organ development"/>
    <property type="evidence" value="ECO:0007669"/>
    <property type="project" value="TreeGrafter"/>
</dbReference>
<dbReference type="GO" id="GO:0060396">
    <property type="term" value="P:growth hormone receptor signaling pathway"/>
    <property type="evidence" value="ECO:0007669"/>
    <property type="project" value="TreeGrafter"/>
</dbReference>
<dbReference type="GO" id="GO:0045927">
    <property type="term" value="P:positive regulation of growth"/>
    <property type="evidence" value="ECO:0007669"/>
    <property type="project" value="TreeGrafter"/>
</dbReference>
<dbReference type="GO" id="GO:0046427">
    <property type="term" value="P:positive regulation of receptor signaling pathway via JAK-STAT"/>
    <property type="evidence" value="ECO:0007669"/>
    <property type="project" value="TreeGrafter"/>
</dbReference>
<dbReference type="GO" id="GO:0031667">
    <property type="term" value="P:response to nutrient levels"/>
    <property type="evidence" value="ECO:0007669"/>
    <property type="project" value="TreeGrafter"/>
</dbReference>
<dbReference type="Gene3D" id="1.20.1250.10">
    <property type="match status" value="1"/>
</dbReference>
<dbReference type="InterPro" id="IPR009079">
    <property type="entry name" value="4_helix_cytokine-like_core"/>
</dbReference>
<dbReference type="InterPro" id="IPR001400">
    <property type="entry name" value="Somatotropin/Prolactin"/>
</dbReference>
<dbReference type="InterPro" id="IPR018116">
    <property type="entry name" value="Somatotropin_CS"/>
</dbReference>
<dbReference type="PANTHER" id="PTHR11417:SF2">
    <property type="entry name" value="SOMATOTROPIN"/>
    <property type="match status" value="1"/>
</dbReference>
<dbReference type="PANTHER" id="PTHR11417">
    <property type="entry name" value="SOMATOTROPIN,PROLACTIN"/>
    <property type="match status" value="1"/>
</dbReference>
<dbReference type="Pfam" id="PF00103">
    <property type="entry name" value="Hormone_1"/>
    <property type="match status" value="2"/>
</dbReference>
<dbReference type="PRINTS" id="PR00836">
    <property type="entry name" value="SOMATOTROPIN"/>
</dbReference>
<dbReference type="SUPFAM" id="SSF47266">
    <property type="entry name" value="4-helical cytokines"/>
    <property type="match status" value="1"/>
</dbReference>
<dbReference type="PROSITE" id="PS00266">
    <property type="entry name" value="SOMATOTROPIN_1"/>
    <property type="match status" value="1"/>
</dbReference>
<dbReference type="PROSITE" id="PS00338">
    <property type="entry name" value="SOMATOTROPIN_2"/>
    <property type="match status" value="1"/>
</dbReference>
<evidence type="ECO:0000250" key="1"/>
<evidence type="ECO:0000305" key="2"/>
<reference key="1">
    <citation type="journal article" date="1989" name="Nucleic Acids Res.">
        <title>The complete cDNA sequence for the premature form of growth hormone of the flounder Paralichthys olivaceus.</title>
        <authorList>
            <person name="Mori H."/>
            <person name="Kimura T."/>
            <person name="Tsunenari T."/>
            <person name="Ogura T."/>
            <person name="Niki H."/>
            <person name="Ezaki B."/>
            <person name="Shigesada K."/>
            <person name="Hiraga S."/>
        </authorList>
    </citation>
    <scope>NUCLEOTIDE SEQUENCE [MRNA]</scope>
    <source>
        <tissue>Pituitary</tissue>
    </source>
</reference>
<reference key="2">
    <citation type="journal article" date="1989" name="J. Biol. Chem.">
        <title>Conserved and unique amino acid residues in the domains of the growth hormones. Flounder growth hormone deduced from the cDNA sequence has the minimal size in the growth hormone prolactin gene family.</title>
        <authorList>
            <person name="Watahiki M."/>
            <person name="Yamamoto M."/>
            <person name="Yamakawa M."/>
            <person name="Tanaka M."/>
            <person name="Nakashima K."/>
        </authorList>
    </citation>
    <scope>NUCLEOTIDE SEQUENCE [MRNA]</scope>
    <source>
        <tissue>Pituitary</tissue>
    </source>
</reference>
<reference key="3">
    <citation type="journal article" date="1995" name="Gene">
        <title>Sequence of the flounder (Paralichthys olivaceus) growth hormone-encoding gene and its promoter region.</title>
        <authorList>
            <person name="Tanaka M."/>
            <person name="Toma Y."/>
            <person name="Ohkubo T."/>
            <person name="Sudo S."/>
            <person name="Nakashima K."/>
        </authorList>
    </citation>
    <scope>NUCLEOTIDE SEQUENCE [GENOMIC DNA]</scope>
</reference>
<reference key="4">
    <citation type="journal article" date="1988" name="Nucleic Acids Res.">
        <title>Amino acid sequence of flounder growth hormone deduced from a cDNA sequence.</title>
        <authorList>
            <person name="Momota H."/>
            <person name="Kosugi R."/>
            <person name="Ohgai H."/>
            <person name="Hara A."/>
            <person name="Ishioka H."/>
        </authorList>
    </citation>
    <scope>NUCLEOTIDE SEQUENCE [MRNA] OF 6-190</scope>
    <source>
        <tissue>Pituitary</tissue>
    </source>
</reference>
<proteinExistence type="evidence at transcript level"/>
<comment type="function">
    <text>Growth hormone plays an important role in growth control and is involved in the regulation of several anabolic processes. Implicated as an osmoregulatory substance important for seawater adaptation.</text>
</comment>
<comment type="subcellular location">
    <subcellularLocation>
        <location>Secreted</location>
    </subcellularLocation>
</comment>
<comment type="similarity">
    <text evidence="2">Belongs to the somatotropin/prolactin family.</text>
</comment>
<protein>
    <recommendedName>
        <fullName>Somatotropin</fullName>
    </recommendedName>
    <alternativeName>
        <fullName>Growth hormone</fullName>
    </alternativeName>
</protein>
<gene>
    <name type="primary">gh</name>
</gene>
<feature type="signal peptide" evidence="1">
    <location>
        <begin position="1"/>
        <end position="17"/>
    </location>
</feature>
<feature type="chain" id="PRO_0000033047" description="Somatotropin">
    <location>
        <begin position="18"/>
        <end position="190"/>
    </location>
</feature>
<feature type="disulfide bond" evidence="1">
    <location>
        <begin position="69"/>
        <end position="163"/>
    </location>
</feature>
<feature type="disulfide bond" evidence="1">
    <location>
        <begin position="180"/>
        <end position="188"/>
    </location>
</feature>